<name>NFCP_RADCR</name>
<keyword id="KW-0002">3D-structure</keyword>
<keyword id="KW-0157">Chromophore</keyword>
<keyword id="KW-0455">Luminescence</keyword>
<keyword id="KW-0599">Photoprotein</keyword>
<comment type="function">
    <text>Non-fluorescent pigment protein that is lilac in color.</text>
</comment>
<comment type="biophysicochemical properties">
    <absorption>
        <max>578 nm</max>
        <text>Fluorescence excitation of HcRed mutant is at 592 nm and emission at 645 nm.</text>
    </absorption>
</comment>
<comment type="subunit">
    <text evidence="2">Homotetramer.</text>
</comment>
<comment type="PTM">
    <text>Contains a chromophore consisting of modified amino acid residues. The chromophore is formed by autocatalytic backbone condensation between Xaa-N and Gly-(N+2), oxidation of Tyr-(N+1) to didehydrotyrosine, and formation of a double bond to the alpha-amino nitrogen of residue Xaa-N. Maturation of the chromophore requires nothing other than molecular oxygen. The precise stereochemistry of the tyrosine has not been determined.</text>
</comment>
<comment type="biotechnology">
    <text evidence="3">Fluorescent proteins have become a useful and ubiquitous tool for making chimeric proteins, where they function as a fluorescent protein tag. Typically they tolerate N- and C-terminal fusion to a broad variety of proteins. They have been expressed in most known cell types and are used as a noninvasive fluorescent marker in living cells and organisms. They enable a wide range of applications where they have functioned as a cell lineage tracer, reporter of gene expression, or as a measure of protein-protein interactions.</text>
</comment>
<comment type="miscellaneous">
    <text>In the wild-type form, the chromophore matures at 20 degrees Celsius. Mutants have been selected to mature at 37 degrees Celsius to make them suitable for use in vivo and cell culture.</text>
</comment>
<comment type="miscellaneous">
    <text evidence="3">A synonymy between H.magnifica and R.crispa is controversial.</text>
</comment>
<comment type="similarity">
    <text evidence="3">Belongs to the GFP family.</text>
</comment>
<proteinExistence type="evidence at protein level"/>
<protein>
    <recommendedName>
        <fullName>GFP-like non-fluorescent chromoprotein</fullName>
    </recommendedName>
    <alternativeName>
        <fullName>HcRed</fullName>
    </alternativeName>
    <alternativeName>
        <fullName>hcCP</fullName>
    </alternativeName>
</protein>
<evidence type="ECO:0000250" key="1">
    <source>
        <dbReference type="UniProtKB" id="P83690"/>
    </source>
</evidence>
<evidence type="ECO:0000269" key="2">
    <source>
    </source>
</evidence>
<evidence type="ECO:0000305" key="3"/>
<evidence type="ECO:0000312" key="4">
    <source>
        <dbReference type="EMBL" id="AAL27538.1"/>
    </source>
</evidence>
<evidence type="ECO:0007829" key="5">
    <source>
        <dbReference type="PDB" id="6DEJ"/>
    </source>
</evidence>
<reference evidence="3 4" key="1">
    <citation type="journal article" date="2001" name="FEBS Lett.">
        <title>GFP-like chromoproteins as a source of far-red fluorescent proteins.</title>
        <authorList>
            <person name="Gurskaya N.G."/>
            <person name="Fradkov A.F."/>
            <person name="Terskikh A."/>
            <person name="Matz M.V."/>
            <person name="Labas Y.A."/>
            <person name="Martynov V.I."/>
            <person name="Yanushevich Y.G."/>
            <person name="Lukyanov K.A."/>
            <person name="Lukyanov S.A."/>
        </authorList>
    </citation>
    <scope>NUCLEOTIDE SEQUENCE [MRNA]</scope>
    <scope>SUBUNIT</scope>
    <scope>MUTAGENESIS OF ALA-2; THR-36; LEU-122; CYS-143; LEU-173; PRO-201 AND LYS-204</scope>
</reference>
<sequence>MAGLLKESMRIKMYMEGTVNGHYFKCEGEGDGNPFTGTQSMRIHVTEGAPLPFAFDILAPCCEYGSRTFVHHTAEIPDFFKQSFPEGFTWERTTTYEDGGILTAHQDTSLEGNCLIYKVKVLGTNFPADGPVMKNKSGGWEPCTEVVYPENGVLCGRNVMALKVGDRRLICHLYTSYRSKKAVRALTMPGFHFTDIRLQMPRKKKDEYFELYEASVARYSDLPEKAN</sequence>
<feature type="chain" id="PRO_0000192587" description="GFP-like non-fluorescent chromoprotein">
    <location>
        <begin position="1"/>
        <end position="227"/>
    </location>
</feature>
<feature type="modified residue" description="2,3-didehydrotyrosine" evidence="1">
    <location>
        <position position="64"/>
    </location>
</feature>
<feature type="cross-link" description="2-iminomethyl-5-imidazolinone (Glu-Gly)" evidence="1">
    <location>
        <begin position="63"/>
        <end position="65"/>
    </location>
</feature>
<feature type="mutagenesis site" description="In Hcred; matures at 37 degrees Celsius and produces over 6-fold brighter fluorescence and a homodimeric form; when associated with A-36; S-143; H-173; L-201 and E-204." evidence="2">
    <original>A</original>
    <variation>S</variation>
    <location>
        <position position="2"/>
    </location>
</feature>
<feature type="mutagenesis site" description="In Hcred; matures at 37 degrees Celsius and produces over 6-fold brighter fluorescence and a homodimeric form; when associated with S-2; S-143; H-173; L-201 and E-204." evidence="2">
    <original>T</original>
    <variation>A</variation>
    <location>
        <position position="36"/>
    </location>
</feature>
<feature type="mutagenesis site" description="Produces a dimeric form." evidence="2">
    <original>L</original>
    <variation>H</variation>
    <location>
        <position position="122"/>
    </location>
</feature>
<feature type="mutagenesis site" description="In Hcred; matures at 37 degrees Celsius and produces over 6-fold brighter fluorescence and a homodimeric form; when associated with S-2; A-36; H-173; L-201 and E-204." evidence="2">
    <original>C</original>
    <variation>S</variation>
    <location>
        <position position="143"/>
    </location>
</feature>
<feature type="mutagenesis site" description="In Hcred; matures at 37 degrees Celsius and produces over 6-fold brighter fluorescence and a homodimeric form; when associated with S-2; A-36; S-143; L-201 and E-204." evidence="2">
    <original>L</original>
    <variation>H</variation>
    <location>
        <position position="173"/>
    </location>
</feature>
<feature type="mutagenesis site" description="In Hcred; matures at 37 degrees Celsius and produces over 6-fold brighter fluorescence and a homodimeric form; when associated with S-2; A-36; S-143; H-173 and E-204." evidence="2">
    <original>P</original>
    <variation>L</variation>
    <location>
        <position position="201"/>
    </location>
</feature>
<feature type="mutagenesis site" description="In Hcred; matures at 37 degrees Celsius and produces over 6-fold brighter fluorescence and a homodimeric form; when associated with S-2; A-36; S-143; H-173 and L-201." evidence="2">
    <original>K</original>
    <variation>E</variation>
    <location>
        <position position="204"/>
    </location>
</feature>
<feature type="strand" evidence="5">
    <location>
        <begin position="7"/>
        <end position="19"/>
    </location>
</feature>
<feature type="strand" evidence="5">
    <location>
        <begin position="22"/>
        <end position="33"/>
    </location>
</feature>
<feature type="turn" evidence="5">
    <location>
        <begin position="34"/>
        <end position="37"/>
    </location>
</feature>
<feature type="strand" evidence="5">
    <location>
        <begin position="38"/>
        <end position="48"/>
    </location>
</feature>
<feature type="helix" evidence="5">
    <location>
        <begin position="55"/>
        <end position="57"/>
    </location>
</feature>
<feature type="helix" evidence="5">
    <location>
        <begin position="59"/>
        <end position="61"/>
    </location>
</feature>
<feature type="helix" evidence="5">
    <location>
        <begin position="79"/>
        <end position="82"/>
    </location>
</feature>
<feature type="turn" evidence="5">
    <location>
        <begin position="83"/>
        <end position="86"/>
    </location>
</feature>
<feature type="strand" evidence="5">
    <location>
        <begin position="88"/>
        <end position="96"/>
    </location>
</feature>
<feature type="strand" evidence="5">
    <location>
        <begin position="101"/>
        <end position="111"/>
    </location>
</feature>
<feature type="strand" evidence="5">
    <location>
        <begin position="114"/>
        <end position="124"/>
    </location>
</feature>
<feature type="turn" evidence="5">
    <location>
        <begin position="131"/>
        <end position="135"/>
    </location>
</feature>
<feature type="strand" evidence="5">
    <location>
        <begin position="143"/>
        <end position="150"/>
    </location>
</feature>
<feature type="strand" evidence="5">
    <location>
        <begin position="153"/>
        <end position="164"/>
    </location>
</feature>
<feature type="strand" evidence="5">
    <location>
        <begin position="167"/>
        <end position="181"/>
    </location>
</feature>
<feature type="helix" evidence="5">
    <location>
        <begin position="183"/>
        <end position="185"/>
    </location>
</feature>
<feature type="strand" evidence="5">
    <location>
        <begin position="191"/>
        <end position="204"/>
    </location>
</feature>
<feature type="turn" evidence="5">
    <location>
        <begin position="205"/>
        <end position="207"/>
    </location>
</feature>
<feature type="strand" evidence="5">
    <location>
        <begin position="208"/>
        <end position="218"/>
    </location>
</feature>
<dbReference type="EMBL" id="AF363776">
    <property type="protein sequence ID" value="AAL27538.1"/>
    <property type="molecule type" value="mRNA"/>
</dbReference>
<dbReference type="PDB" id="1YZW">
    <property type="method" value="X-ray"/>
    <property type="resolution" value="2.10 A"/>
    <property type="chains" value="A/B/C/D=1-227"/>
</dbReference>
<dbReference type="PDB" id="6DEJ">
    <property type="method" value="X-ray"/>
    <property type="resolution" value="1.63 A"/>
    <property type="chains" value="A/B/C/D=1-227"/>
</dbReference>
<dbReference type="PDB" id="6Y1G">
    <property type="method" value="X-ray"/>
    <property type="resolution" value="2.30 A"/>
    <property type="chains" value="A/B/C/D=2-227"/>
</dbReference>
<dbReference type="PDBsum" id="1YZW"/>
<dbReference type="PDBsum" id="6DEJ"/>
<dbReference type="PDBsum" id="6Y1G"/>
<dbReference type="SMR" id="Q95W85"/>
<dbReference type="EvolutionaryTrace" id="Q95W85"/>
<dbReference type="GO" id="GO:0008218">
    <property type="term" value="P:bioluminescence"/>
    <property type="evidence" value="ECO:0007669"/>
    <property type="project" value="UniProtKB-KW"/>
</dbReference>
<dbReference type="Gene3D" id="2.40.155.10">
    <property type="entry name" value="Green fluorescent protein"/>
    <property type="match status" value="1"/>
</dbReference>
<dbReference type="InterPro" id="IPR009017">
    <property type="entry name" value="GFP"/>
</dbReference>
<dbReference type="InterPro" id="IPR011584">
    <property type="entry name" value="GFP-related"/>
</dbReference>
<dbReference type="Pfam" id="PF01353">
    <property type="entry name" value="GFP"/>
    <property type="match status" value="1"/>
</dbReference>
<dbReference type="SUPFAM" id="SSF54511">
    <property type="entry name" value="GFP-like"/>
    <property type="match status" value="1"/>
</dbReference>
<organism>
    <name type="scientific">Radianthus crispa</name>
    <name type="common">Leathery sea anemone</name>
    <name type="synonym">Heteractis crispa</name>
    <dbReference type="NCBI Taxonomy" id="3122430"/>
    <lineage>
        <taxon>Eukaryota</taxon>
        <taxon>Metazoa</taxon>
        <taxon>Cnidaria</taxon>
        <taxon>Anthozoa</taxon>
        <taxon>Hexacorallia</taxon>
        <taxon>Actiniaria</taxon>
        <taxon>Stichodactylidae</taxon>
        <taxon>Radianthus</taxon>
    </lineage>
</organism>
<accession>Q95W85</accession>